<evidence type="ECO:0000250" key="1">
    <source>
        <dbReference type="UniProtKB" id="Q8GTM0"/>
    </source>
</evidence>
<evidence type="ECO:0000269" key="2">
    <source>
    </source>
</evidence>
<evidence type="ECO:0000269" key="3">
    <source>
    </source>
</evidence>
<evidence type="ECO:0000305" key="4"/>
<protein>
    <recommendedName>
        <fullName>Defensin Tk-AMP-D1</fullName>
    </recommendedName>
</protein>
<keyword id="KW-0929">Antimicrobial</keyword>
<keyword id="KW-0211">Defensin</keyword>
<keyword id="KW-0903">Direct protein sequencing</keyword>
<keyword id="KW-1015">Disulfide bond</keyword>
<keyword id="KW-0295">Fungicide</keyword>
<keyword id="KW-0611">Plant defense</keyword>
<sequence length="49" mass="5744">RTCQSQSHKFKGACFSDTNCDSVCRTENFPRGQCNQHHVERKCYCERDC</sequence>
<organism>
    <name type="scientific">Triticum kiharae</name>
    <name type="common">Wheat</name>
    <dbReference type="NCBI Taxonomy" id="376535"/>
    <lineage>
        <taxon>Eukaryota</taxon>
        <taxon>Viridiplantae</taxon>
        <taxon>Streptophyta</taxon>
        <taxon>Embryophyta</taxon>
        <taxon>Tracheophyta</taxon>
        <taxon>Spermatophyta</taxon>
        <taxon>Magnoliopsida</taxon>
        <taxon>Liliopsida</taxon>
        <taxon>Poales</taxon>
        <taxon>Poaceae</taxon>
        <taxon>BOP clade</taxon>
        <taxon>Pooideae</taxon>
        <taxon>Triticodae</taxon>
        <taxon>Triticeae</taxon>
        <taxon>Triticinae</taxon>
        <taxon>Triticum</taxon>
    </lineage>
</organism>
<proteinExistence type="evidence at protein level"/>
<reference evidence="4" key="1">
    <citation type="journal article" date="2007" name="Biochimie">
        <title>Seed defensins from T. kiharae and related species: Genome localization of defensin-encoding genes.</title>
        <authorList>
            <person name="Odintsova T.I."/>
            <person name="Egorov T.A."/>
            <person name="Musolyamov A.K."/>
            <person name="Odintsova M.S."/>
            <person name="Pukhalsky V.A."/>
            <person name="Grishin E.V."/>
        </authorList>
    </citation>
    <scope>PROTEIN SEQUENCE</scope>
    <scope>MASS SPECTROMETRY</scope>
    <source>
        <tissue evidence="2">Seed</tissue>
    </source>
</reference>
<reference evidence="4" key="2">
    <citation type="journal article" date="2008" name="Biochimie">
        <title>Seed defensins of barnyard grass Echinochloa crusgalli (L.) Beauv.</title>
        <authorList>
            <person name="Odintsova T.I."/>
            <person name="Rogozhin E.A."/>
            <person name="Baranov Y."/>
            <person name="Musolyamov A.K."/>
            <person name="Yalpani N."/>
            <person name="Egorov T.A."/>
            <person name="Grishin E.V."/>
        </authorList>
    </citation>
    <scope>FUNCTION</scope>
</reference>
<accession>P84963</accession>
<comment type="function">
    <text evidence="3">Has weak antifungal activity against F.graminearum and F.verticillioides below 30 ug/ml, but not against A.consortiale B.cinerea, H.sativum, F.culmorum, C.graminicola and D.maydis.</text>
</comment>
<comment type="mass spectrometry" mass="5735.0" method="MALDI" evidence="2"/>
<comment type="similarity">
    <text evidence="4">Belongs to the DEFL family.</text>
</comment>
<dbReference type="SMR" id="P84963"/>
<dbReference type="GO" id="GO:0050832">
    <property type="term" value="P:defense response to fungus"/>
    <property type="evidence" value="ECO:0007669"/>
    <property type="project" value="UniProtKB-KW"/>
</dbReference>
<dbReference type="GO" id="GO:0031640">
    <property type="term" value="P:killing of cells of another organism"/>
    <property type="evidence" value="ECO:0007669"/>
    <property type="project" value="UniProtKB-KW"/>
</dbReference>
<dbReference type="Gene3D" id="3.30.30.10">
    <property type="entry name" value="Knottin, scorpion toxin-like"/>
    <property type="match status" value="1"/>
</dbReference>
<dbReference type="InterPro" id="IPR008176">
    <property type="entry name" value="Defensin_plant"/>
</dbReference>
<dbReference type="InterPro" id="IPR003614">
    <property type="entry name" value="Scorpion_toxin-like"/>
</dbReference>
<dbReference type="InterPro" id="IPR036574">
    <property type="entry name" value="Scorpion_toxin-like_sf"/>
</dbReference>
<dbReference type="Pfam" id="PF00304">
    <property type="entry name" value="Gamma-thionin"/>
    <property type="match status" value="1"/>
</dbReference>
<dbReference type="PRINTS" id="PR00288">
    <property type="entry name" value="PUROTHIONIN"/>
</dbReference>
<dbReference type="SMART" id="SM00505">
    <property type="entry name" value="Knot1"/>
    <property type="match status" value="1"/>
</dbReference>
<dbReference type="SUPFAM" id="SSF57095">
    <property type="entry name" value="Scorpion toxin-like"/>
    <property type="match status" value="1"/>
</dbReference>
<dbReference type="PROSITE" id="PS00940">
    <property type="entry name" value="GAMMA_THIONIN"/>
    <property type="match status" value="1"/>
</dbReference>
<name>DEF1_TRIKH</name>
<feature type="chain" id="PRO_0000287889" description="Defensin Tk-AMP-D1">
    <location>
        <begin position="1"/>
        <end position="49"/>
    </location>
</feature>
<feature type="disulfide bond" evidence="1">
    <location>
        <begin position="3"/>
        <end position="49"/>
    </location>
</feature>
<feature type="disulfide bond" evidence="1">
    <location>
        <begin position="14"/>
        <end position="34"/>
    </location>
</feature>
<feature type="disulfide bond" evidence="1">
    <location>
        <begin position="20"/>
        <end position="43"/>
    </location>
</feature>
<feature type="disulfide bond" evidence="1">
    <location>
        <begin position="24"/>
        <end position="45"/>
    </location>
</feature>